<organism>
    <name type="scientific">Staphylococcus carnosus (strain TM300)</name>
    <dbReference type="NCBI Taxonomy" id="396513"/>
    <lineage>
        <taxon>Bacteria</taxon>
        <taxon>Bacillati</taxon>
        <taxon>Bacillota</taxon>
        <taxon>Bacilli</taxon>
        <taxon>Bacillales</taxon>
        <taxon>Staphylococcaceae</taxon>
        <taxon>Staphylococcus</taxon>
    </lineage>
</organism>
<feature type="chain" id="PRO_1000190541" description="Glutamyl-tRNA reductase">
    <location>
        <begin position="1"/>
        <end position="445"/>
    </location>
</feature>
<feature type="active site" description="Nucleophile" evidence="1">
    <location>
        <position position="50"/>
    </location>
</feature>
<feature type="binding site" evidence="1">
    <location>
        <begin position="49"/>
        <end position="52"/>
    </location>
    <ligand>
        <name>substrate</name>
    </ligand>
</feature>
<feature type="binding site" evidence="1">
    <location>
        <position position="109"/>
    </location>
    <ligand>
        <name>substrate</name>
    </ligand>
</feature>
<feature type="binding site" evidence="1">
    <location>
        <begin position="114"/>
        <end position="116"/>
    </location>
    <ligand>
        <name>substrate</name>
    </ligand>
</feature>
<feature type="binding site" evidence="1">
    <location>
        <position position="120"/>
    </location>
    <ligand>
        <name>substrate</name>
    </ligand>
</feature>
<feature type="binding site" evidence="1">
    <location>
        <begin position="189"/>
        <end position="194"/>
    </location>
    <ligand>
        <name>NADP(+)</name>
        <dbReference type="ChEBI" id="CHEBI:58349"/>
    </ligand>
</feature>
<feature type="site" description="Important for activity" evidence="1">
    <location>
        <position position="99"/>
    </location>
</feature>
<gene>
    <name evidence="1" type="primary">hemA</name>
    <name type="ordered locus">Sca_1278</name>
</gene>
<protein>
    <recommendedName>
        <fullName evidence="1">Glutamyl-tRNA reductase</fullName>
        <shortName evidence="1">GluTR</shortName>
        <ecNumber evidence="1">1.2.1.70</ecNumber>
    </recommendedName>
</protein>
<name>HEM1_STACT</name>
<sequence length="445" mass="50269">MHIIAISINHRTADVALREKVAFKADAIRESHLDLFETKSILENVILSTCNRTEVYAVADQIHTGRYYIQRFLARKFGLEVDEIKEMSEVFVGDEAVEHIFRVTAGLDSIVLGETQILGQMRDAFFIAQEEGTTGTIFNHLFKQAITFAKRAHHETDIADNAVSVSYAAVELAKKVFGNLKSKHAVIVGAGEMSELSLLNLLGAGIDNITVVNRTKERAQQLAEKHQTQYADLSNLNELLVNADIVISSTSAQNYVITQEMMNNVLDQRRHEPMVLIDIAVPRDIDPAIELDMNVFSYDIDDLKGLVDANLRERQAAADQIAEQIPAEINEHNDWVNMLGVVPVIRALREKAMHIQQDTMDSIDRKLPDLSERERKVISKHTKSIINQMLKDPIKQAKELSNDKNSSEKLELFQNIFDIEAESEYKKSLAKKERKLSARHILGFE</sequence>
<proteinExistence type="inferred from homology"/>
<dbReference type="EC" id="1.2.1.70" evidence="1"/>
<dbReference type="EMBL" id="AM295250">
    <property type="protein sequence ID" value="CAL28184.1"/>
    <property type="molecule type" value="Genomic_DNA"/>
</dbReference>
<dbReference type="RefSeq" id="WP_015900524.1">
    <property type="nucleotide sequence ID" value="NC_012121.1"/>
</dbReference>
<dbReference type="SMR" id="B9DND0"/>
<dbReference type="GeneID" id="93793702"/>
<dbReference type="KEGG" id="sca:SCA_1278"/>
<dbReference type="eggNOG" id="COG0373">
    <property type="taxonomic scope" value="Bacteria"/>
</dbReference>
<dbReference type="HOGENOM" id="CLU_035113_2_2_9"/>
<dbReference type="OrthoDB" id="110209at2"/>
<dbReference type="BioCyc" id="SCAR396513:SCA_RS06375-MONOMER"/>
<dbReference type="UniPathway" id="UPA00251">
    <property type="reaction ID" value="UER00316"/>
</dbReference>
<dbReference type="Proteomes" id="UP000000444">
    <property type="component" value="Chromosome"/>
</dbReference>
<dbReference type="GO" id="GO:0008883">
    <property type="term" value="F:glutamyl-tRNA reductase activity"/>
    <property type="evidence" value="ECO:0007669"/>
    <property type="project" value="UniProtKB-UniRule"/>
</dbReference>
<dbReference type="GO" id="GO:0050661">
    <property type="term" value="F:NADP binding"/>
    <property type="evidence" value="ECO:0007669"/>
    <property type="project" value="InterPro"/>
</dbReference>
<dbReference type="GO" id="GO:0006782">
    <property type="term" value="P:protoporphyrinogen IX biosynthetic process"/>
    <property type="evidence" value="ECO:0007669"/>
    <property type="project" value="UniProtKB-UniRule"/>
</dbReference>
<dbReference type="CDD" id="cd05213">
    <property type="entry name" value="NAD_bind_Glutamyl_tRNA_reduct"/>
    <property type="match status" value="1"/>
</dbReference>
<dbReference type="FunFam" id="3.30.460.30:FF:000001">
    <property type="entry name" value="Glutamyl-tRNA reductase"/>
    <property type="match status" value="1"/>
</dbReference>
<dbReference type="FunFam" id="3.40.50.720:FF:000031">
    <property type="entry name" value="Glutamyl-tRNA reductase"/>
    <property type="match status" value="1"/>
</dbReference>
<dbReference type="Gene3D" id="3.30.460.30">
    <property type="entry name" value="Glutamyl-tRNA reductase, N-terminal domain"/>
    <property type="match status" value="1"/>
</dbReference>
<dbReference type="Gene3D" id="3.40.50.720">
    <property type="entry name" value="NAD(P)-binding Rossmann-like Domain"/>
    <property type="match status" value="1"/>
</dbReference>
<dbReference type="HAMAP" id="MF_00087">
    <property type="entry name" value="Glu_tRNA_reductase"/>
    <property type="match status" value="1"/>
</dbReference>
<dbReference type="InterPro" id="IPR000343">
    <property type="entry name" value="4pyrrol_synth_GluRdtase"/>
</dbReference>
<dbReference type="InterPro" id="IPR015896">
    <property type="entry name" value="4pyrrol_synth_GluRdtase_dimer"/>
</dbReference>
<dbReference type="InterPro" id="IPR015895">
    <property type="entry name" value="4pyrrol_synth_GluRdtase_N"/>
</dbReference>
<dbReference type="InterPro" id="IPR018214">
    <property type="entry name" value="GluRdtase_CS"/>
</dbReference>
<dbReference type="InterPro" id="IPR036453">
    <property type="entry name" value="GluRdtase_dimer_dom_sf"/>
</dbReference>
<dbReference type="InterPro" id="IPR036343">
    <property type="entry name" value="GluRdtase_N_sf"/>
</dbReference>
<dbReference type="InterPro" id="IPR036291">
    <property type="entry name" value="NAD(P)-bd_dom_sf"/>
</dbReference>
<dbReference type="InterPro" id="IPR006151">
    <property type="entry name" value="Shikm_DH/Glu-tRNA_Rdtase"/>
</dbReference>
<dbReference type="NCBIfam" id="TIGR01035">
    <property type="entry name" value="hemA"/>
    <property type="match status" value="1"/>
</dbReference>
<dbReference type="PANTHER" id="PTHR43120">
    <property type="entry name" value="GLUTAMYL-TRNA REDUCTASE 1, CHLOROPLASTIC"/>
    <property type="match status" value="1"/>
</dbReference>
<dbReference type="PANTHER" id="PTHR43120:SF1">
    <property type="entry name" value="GLUTAMYL-TRNA REDUCTASE 1, CHLOROPLASTIC"/>
    <property type="match status" value="1"/>
</dbReference>
<dbReference type="Pfam" id="PF00745">
    <property type="entry name" value="GlutR_dimer"/>
    <property type="match status" value="1"/>
</dbReference>
<dbReference type="Pfam" id="PF05201">
    <property type="entry name" value="GlutR_N"/>
    <property type="match status" value="1"/>
</dbReference>
<dbReference type="Pfam" id="PF01488">
    <property type="entry name" value="Shikimate_DH"/>
    <property type="match status" value="1"/>
</dbReference>
<dbReference type="PIRSF" id="PIRSF000445">
    <property type="entry name" value="4pyrrol_synth_GluRdtase"/>
    <property type="match status" value="1"/>
</dbReference>
<dbReference type="SUPFAM" id="SSF69742">
    <property type="entry name" value="Glutamyl tRNA-reductase catalytic, N-terminal domain"/>
    <property type="match status" value="1"/>
</dbReference>
<dbReference type="SUPFAM" id="SSF69075">
    <property type="entry name" value="Glutamyl tRNA-reductase dimerization domain"/>
    <property type="match status" value="1"/>
</dbReference>
<dbReference type="SUPFAM" id="SSF51735">
    <property type="entry name" value="NAD(P)-binding Rossmann-fold domains"/>
    <property type="match status" value="1"/>
</dbReference>
<dbReference type="PROSITE" id="PS00747">
    <property type="entry name" value="GLUTR"/>
    <property type="match status" value="1"/>
</dbReference>
<reference key="1">
    <citation type="journal article" date="2009" name="Appl. Environ. Microbiol.">
        <title>Genome analysis of the meat starter culture bacterium Staphylococcus carnosus TM300.</title>
        <authorList>
            <person name="Rosenstein R."/>
            <person name="Nerz C."/>
            <person name="Biswas L."/>
            <person name="Resch A."/>
            <person name="Raddatz G."/>
            <person name="Schuster S.C."/>
            <person name="Goetz F."/>
        </authorList>
    </citation>
    <scope>NUCLEOTIDE SEQUENCE [LARGE SCALE GENOMIC DNA]</scope>
    <source>
        <strain>TM300</strain>
    </source>
</reference>
<evidence type="ECO:0000255" key="1">
    <source>
        <dbReference type="HAMAP-Rule" id="MF_00087"/>
    </source>
</evidence>
<accession>B9DND0</accession>
<keyword id="KW-0521">NADP</keyword>
<keyword id="KW-0560">Oxidoreductase</keyword>
<keyword id="KW-0627">Porphyrin biosynthesis</keyword>
<keyword id="KW-1185">Reference proteome</keyword>
<comment type="function">
    <text evidence="1">Catalyzes the NADPH-dependent reduction of glutamyl-tRNA(Glu) to glutamate 1-semialdehyde (GSA).</text>
</comment>
<comment type="catalytic activity">
    <reaction evidence="1">
        <text>(S)-4-amino-5-oxopentanoate + tRNA(Glu) + NADP(+) = L-glutamyl-tRNA(Glu) + NADPH + H(+)</text>
        <dbReference type="Rhea" id="RHEA:12344"/>
        <dbReference type="Rhea" id="RHEA-COMP:9663"/>
        <dbReference type="Rhea" id="RHEA-COMP:9680"/>
        <dbReference type="ChEBI" id="CHEBI:15378"/>
        <dbReference type="ChEBI" id="CHEBI:57501"/>
        <dbReference type="ChEBI" id="CHEBI:57783"/>
        <dbReference type="ChEBI" id="CHEBI:58349"/>
        <dbReference type="ChEBI" id="CHEBI:78442"/>
        <dbReference type="ChEBI" id="CHEBI:78520"/>
        <dbReference type="EC" id="1.2.1.70"/>
    </reaction>
</comment>
<comment type="pathway">
    <text evidence="1">Porphyrin-containing compound metabolism; protoporphyrin-IX biosynthesis; 5-aminolevulinate from L-glutamyl-tRNA(Glu): step 1/2.</text>
</comment>
<comment type="subunit">
    <text evidence="1">Homodimer.</text>
</comment>
<comment type="domain">
    <text evidence="1">Possesses an unusual extended V-shaped dimeric structure with each monomer consisting of three distinct domains arranged along a curved 'spinal' alpha-helix. The N-terminal catalytic domain specifically recognizes the glutamate moiety of the substrate. The second domain is the NADPH-binding domain, and the third C-terminal domain is responsible for dimerization.</text>
</comment>
<comment type="miscellaneous">
    <text evidence="1">During catalysis, the active site Cys acts as a nucleophile attacking the alpha-carbonyl group of tRNA-bound glutamate with the formation of a thioester intermediate between enzyme and glutamate, and the concomitant release of tRNA(Glu). The thioester intermediate is finally reduced by direct hydride transfer from NADPH, to form the product GSA.</text>
</comment>
<comment type="similarity">
    <text evidence="1">Belongs to the glutamyl-tRNA reductase family.</text>
</comment>